<keyword id="KW-0131">Cell cycle</keyword>
<keyword id="KW-0132">Cell division</keyword>
<keyword id="KW-0137">Centromere</keyword>
<keyword id="KW-0158">Chromosome</keyword>
<keyword id="KW-0159">Chromosome partition</keyword>
<keyword id="KW-0175">Coiled coil</keyword>
<keyword id="KW-0963">Cytoplasm</keyword>
<keyword id="KW-0206">Cytoskeleton</keyword>
<keyword id="KW-0995">Kinetochore</keyword>
<keyword id="KW-0493">Microtubule</keyword>
<keyword id="KW-0498">Mitosis</keyword>
<keyword id="KW-0539">Nucleus</keyword>
<keyword id="KW-1185">Reference proteome</keyword>
<dbReference type="EMBL" id="CR380954">
    <property type="protein sequence ID" value="CAG60037.1"/>
    <property type="molecule type" value="Genomic_DNA"/>
</dbReference>
<dbReference type="RefSeq" id="XP_447104.1">
    <property type="nucleotide sequence ID" value="XM_447104.1"/>
</dbReference>
<dbReference type="SMR" id="Q6FRP0"/>
<dbReference type="FunCoup" id="Q6FRP0">
    <property type="interactions" value="30"/>
</dbReference>
<dbReference type="STRING" id="284593.Q6FRP0"/>
<dbReference type="EnsemblFungi" id="CAGL0H07073g-T">
    <property type="protein sequence ID" value="CAGL0H07073g-T-p1"/>
    <property type="gene ID" value="CAGL0H07073g"/>
</dbReference>
<dbReference type="KEGG" id="cgr:2888581"/>
<dbReference type="CGD" id="CAL0129896">
    <property type="gene designation" value="CAGL0H07073g"/>
</dbReference>
<dbReference type="VEuPathDB" id="FungiDB:B1J91_H07073g"/>
<dbReference type="VEuPathDB" id="FungiDB:CAGL0H07073g"/>
<dbReference type="eggNOG" id="ENOG502S890">
    <property type="taxonomic scope" value="Eukaryota"/>
</dbReference>
<dbReference type="HOGENOM" id="CLU_177920_0_0_1"/>
<dbReference type="InParanoid" id="Q6FRP0"/>
<dbReference type="OMA" id="SQMWANY"/>
<dbReference type="Proteomes" id="UP000002428">
    <property type="component" value="Chromosome H"/>
</dbReference>
<dbReference type="GO" id="GO:0005737">
    <property type="term" value="C:cytoplasm"/>
    <property type="evidence" value="ECO:0007669"/>
    <property type="project" value="UniProtKB-KW"/>
</dbReference>
<dbReference type="GO" id="GO:0042729">
    <property type="term" value="C:DASH complex"/>
    <property type="evidence" value="ECO:0000250"/>
    <property type="project" value="UniProtKB"/>
</dbReference>
<dbReference type="GO" id="GO:0005874">
    <property type="term" value="C:microtubule"/>
    <property type="evidence" value="ECO:0007669"/>
    <property type="project" value="UniProtKB-KW"/>
</dbReference>
<dbReference type="GO" id="GO:0072686">
    <property type="term" value="C:mitotic spindle"/>
    <property type="evidence" value="ECO:0007669"/>
    <property type="project" value="InterPro"/>
</dbReference>
<dbReference type="GO" id="GO:0051010">
    <property type="term" value="F:microtubule plus-end binding"/>
    <property type="evidence" value="ECO:0007669"/>
    <property type="project" value="EnsemblFungi"/>
</dbReference>
<dbReference type="GO" id="GO:0008608">
    <property type="term" value="P:attachment of spindle microtubules to kinetochore"/>
    <property type="evidence" value="ECO:0000250"/>
    <property type="project" value="UniProtKB"/>
</dbReference>
<dbReference type="GO" id="GO:0051301">
    <property type="term" value="P:cell division"/>
    <property type="evidence" value="ECO:0007669"/>
    <property type="project" value="UniProtKB-KW"/>
</dbReference>
<dbReference type="GO" id="GO:1990758">
    <property type="term" value="P:mitotic sister chromatid biorientation"/>
    <property type="evidence" value="ECO:0000250"/>
    <property type="project" value="UniProtKB"/>
</dbReference>
<dbReference type="GO" id="GO:0051987">
    <property type="term" value="P:positive regulation of attachment of spindle microtubules to kinetochore"/>
    <property type="evidence" value="ECO:0007669"/>
    <property type="project" value="EnsemblFungi"/>
</dbReference>
<dbReference type="GO" id="GO:0031116">
    <property type="term" value="P:positive regulation of microtubule polymerization"/>
    <property type="evidence" value="ECO:0007669"/>
    <property type="project" value="EnsemblFungi"/>
</dbReference>
<dbReference type="GO" id="GO:1990976">
    <property type="term" value="P:protein transport along microtubule to mitotic spindle pole body"/>
    <property type="evidence" value="ECO:0000250"/>
    <property type="project" value="UniProtKB"/>
</dbReference>
<dbReference type="InterPro" id="IPR013959">
    <property type="entry name" value="DASH_Dad4"/>
</dbReference>
<dbReference type="PANTHER" id="PTHR28222">
    <property type="entry name" value="DASH COMPLEX SUBUNIT DAD4"/>
    <property type="match status" value="1"/>
</dbReference>
<dbReference type="PANTHER" id="PTHR28222:SF1">
    <property type="entry name" value="DASH COMPLEX SUBUNIT DAD4"/>
    <property type="match status" value="1"/>
</dbReference>
<dbReference type="Pfam" id="PF08650">
    <property type="entry name" value="DASH_Dad4"/>
    <property type="match status" value="1"/>
</dbReference>
<organism>
    <name type="scientific">Candida glabrata (strain ATCC 2001 / BCRC 20586 / JCM 3761 / NBRC 0622 / NRRL Y-65 / CBS 138)</name>
    <name type="common">Yeast</name>
    <name type="synonym">Nakaseomyces glabratus</name>
    <dbReference type="NCBI Taxonomy" id="284593"/>
    <lineage>
        <taxon>Eukaryota</taxon>
        <taxon>Fungi</taxon>
        <taxon>Dikarya</taxon>
        <taxon>Ascomycota</taxon>
        <taxon>Saccharomycotina</taxon>
        <taxon>Saccharomycetes</taxon>
        <taxon>Saccharomycetales</taxon>
        <taxon>Saccharomycetaceae</taxon>
        <taxon>Nakaseomyces</taxon>
    </lineage>
</organism>
<gene>
    <name type="primary">DAD4</name>
    <name type="ordered locus">CAGL0H07073g</name>
</gene>
<feature type="chain" id="PRO_0000176049" description="DASH complex subunit DAD4">
    <location>
        <begin position="1"/>
        <end position="73"/>
    </location>
</feature>
<feature type="coiled-coil region" evidence="3">
    <location>
        <begin position="14"/>
        <end position="54"/>
    </location>
</feature>
<proteinExistence type="inferred from homology"/>
<name>DAD4_CANGA</name>
<comment type="function">
    <text evidence="1">Component of the DASH complex that connects microtubules with kinetochores and couples microtubule depolymerisation to chromosome movement; it is involved in retrieving kinetochores to the spindle poles before their re-orientation on the spindle in early mitosis and allows microtubule depolymerization to pull chromosomes apart and resist detachment during anaphase. Kinetochores, consisting of a centromere-associated inner segment and a microtubule-contacting outer segment, play a crucial role in chromosome segregation by mediating the physical connection between centromeric DNA and microtubules. Kinetochores also serve as an input point for the spindle assembly checkpoint, which delays anaphase until all chromosomes have bioriented on the mitotic spindle.</text>
</comment>
<comment type="subunit">
    <text evidence="1 2">Component of the DASH complex consisting of ASK1, DAD1, DAD2, DAD3, DAD4, DAM1, DUO1, HSK3, SPC19 and SPC34, with a stoichiometry of one copy of each subunit per complex. Multiple DASH complexes oligomerize to form a ring that encircles spindle microtubules and organizes the rod-like NDC80 complexes of the outer kinetochore. DASH complex oligomerization strengthens microtubule attachments (By similarity). On cytoplasmic microtubules, DASH complexes appear to form patches instead of rings (By similarity).</text>
</comment>
<comment type="subcellular location">
    <subcellularLocation>
        <location evidence="1">Nucleus</location>
    </subcellularLocation>
    <subcellularLocation>
        <location evidence="1">Cytoplasm</location>
        <location evidence="1">Cytoskeleton</location>
        <location evidence="1">Spindle</location>
    </subcellularLocation>
    <subcellularLocation>
        <location evidence="1">Chromosome</location>
        <location evidence="1">Centromere</location>
        <location evidence="1">Kinetochore</location>
    </subcellularLocation>
</comment>
<comment type="similarity">
    <text evidence="4">Belongs to the DASH complex DAD4 family.</text>
</comment>
<evidence type="ECO:0000250" key="1">
    <source>
        <dbReference type="UniProtKB" id="P69851"/>
    </source>
</evidence>
<evidence type="ECO:0000250" key="2">
    <source>
        <dbReference type="UniProtKB" id="Q50HP4"/>
    </source>
</evidence>
<evidence type="ECO:0000255" key="3"/>
<evidence type="ECO:0000305" key="4"/>
<reference key="1">
    <citation type="journal article" date="2004" name="Nature">
        <title>Genome evolution in yeasts.</title>
        <authorList>
            <person name="Dujon B."/>
            <person name="Sherman D."/>
            <person name="Fischer G."/>
            <person name="Durrens P."/>
            <person name="Casaregola S."/>
            <person name="Lafontaine I."/>
            <person name="de Montigny J."/>
            <person name="Marck C."/>
            <person name="Neuveglise C."/>
            <person name="Talla E."/>
            <person name="Goffard N."/>
            <person name="Frangeul L."/>
            <person name="Aigle M."/>
            <person name="Anthouard V."/>
            <person name="Babour A."/>
            <person name="Barbe V."/>
            <person name="Barnay S."/>
            <person name="Blanchin S."/>
            <person name="Beckerich J.-M."/>
            <person name="Beyne E."/>
            <person name="Bleykasten C."/>
            <person name="Boisrame A."/>
            <person name="Boyer J."/>
            <person name="Cattolico L."/>
            <person name="Confanioleri F."/>
            <person name="de Daruvar A."/>
            <person name="Despons L."/>
            <person name="Fabre E."/>
            <person name="Fairhead C."/>
            <person name="Ferry-Dumazet H."/>
            <person name="Groppi A."/>
            <person name="Hantraye F."/>
            <person name="Hennequin C."/>
            <person name="Jauniaux N."/>
            <person name="Joyet P."/>
            <person name="Kachouri R."/>
            <person name="Kerrest A."/>
            <person name="Koszul R."/>
            <person name="Lemaire M."/>
            <person name="Lesur I."/>
            <person name="Ma L."/>
            <person name="Muller H."/>
            <person name="Nicaud J.-M."/>
            <person name="Nikolski M."/>
            <person name="Oztas S."/>
            <person name="Ozier-Kalogeropoulos O."/>
            <person name="Pellenz S."/>
            <person name="Potier S."/>
            <person name="Richard G.-F."/>
            <person name="Straub M.-L."/>
            <person name="Suleau A."/>
            <person name="Swennen D."/>
            <person name="Tekaia F."/>
            <person name="Wesolowski-Louvel M."/>
            <person name="Westhof E."/>
            <person name="Wirth B."/>
            <person name="Zeniou-Meyer M."/>
            <person name="Zivanovic Y."/>
            <person name="Bolotin-Fukuhara M."/>
            <person name="Thierry A."/>
            <person name="Bouchier C."/>
            <person name="Caudron B."/>
            <person name="Scarpelli C."/>
            <person name="Gaillardin C."/>
            <person name="Weissenbach J."/>
            <person name="Wincker P."/>
            <person name="Souciet J.-L."/>
        </authorList>
    </citation>
    <scope>NUCLEOTIDE SEQUENCE [LARGE SCALE GENOMIC DNA]</scope>
    <source>
        <strain>ATCC 2001 / BCRC 20586 / JCM 3761 / NBRC 0622 / NRRL Y-65 / CBS 138</strain>
    </source>
</reference>
<protein>
    <recommendedName>
        <fullName>DASH complex subunit DAD4</fullName>
    </recommendedName>
    <alternativeName>
        <fullName>Outer kinetochore protein DAD4</fullName>
    </alternativeName>
</protein>
<sequence length="73" mass="8467">MVENPYEEVQVNVLSRIIANVEKLNQSVRTLNQELENVNKRNKNLEVMGQICENYHRSVQFNLEATGNKKPPL</sequence>
<accession>Q6FRP0</accession>